<name>MIAA_STAAS</name>
<comment type="function">
    <text evidence="1">Catalyzes the transfer of a dimethylallyl group onto the adenine at position 37 in tRNAs that read codons beginning with uridine, leading to the formation of N6-(dimethylallyl)adenosine (i(6)A).</text>
</comment>
<comment type="catalytic activity">
    <reaction evidence="1">
        <text>adenosine(37) in tRNA + dimethylallyl diphosphate = N(6)-dimethylallyladenosine(37) in tRNA + diphosphate</text>
        <dbReference type="Rhea" id="RHEA:26482"/>
        <dbReference type="Rhea" id="RHEA-COMP:10162"/>
        <dbReference type="Rhea" id="RHEA-COMP:10375"/>
        <dbReference type="ChEBI" id="CHEBI:33019"/>
        <dbReference type="ChEBI" id="CHEBI:57623"/>
        <dbReference type="ChEBI" id="CHEBI:74411"/>
        <dbReference type="ChEBI" id="CHEBI:74415"/>
        <dbReference type="EC" id="2.5.1.75"/>
    </reaction>
</comment>
<comment type="cofactor">
    <cofactor evidence="1">
        <name>Mg(2+)</name>
        <dbReference type="ChEBI" id="CHEBI:18420"/>
    </cofactor>
</comment>
<comment type="subunit">
    <text evidence="1">Monomer.</text>
</comment>
<comment type="similarity">
    <text evidence="1">Belongs to the IPP transferase family.</text>
</comment>
<proteinExistence type="inferred from homology"/>
<gene>
    <name evidence="1" type="primary">miaA</name>
    <name type="ordered locus">SAS1236</name>
</gene>
<evidence type="ECO:0000255" key="1">
    <source>
        <dbReference type="HAMAP-Rule" id="MF_00185"/>
    </source>
</evidence>
<sequence length="311" mass="35826">MNKNKPFIVVIVGPTASGKTELSIELAKRINGEIISGDSMQVYKHMNIGTAKVTPEEMDGIPHHLIDILNPDDTFSAYEFKRLAEDLITDITNRGKVPIIAGGTGLYIQSLIYNYELEDETVTPAQLSIVKQKLSALEHLDNQQLHDYLAQFDAVSAENIHPNNRQRGLRAIEYYLKTKKLLSNRKKVQQFTENYDTLLLGIEMSRKTLYSRINKRVDIMLDHGLFREVQQLVEQGYESCQSMQAIGYKELIPVINGQMIYEDAVNDLKQHSRQYAKRQMTWFKNKMSVHWLDKENMSLQMMLDEITTQIK</sequence>
<organism>
    <name type="scientific">Staphylococcus aureus (strain MSSA476)</name>
    <dbReference type="NCBI Taxonomy" id="282459"/>
    <lineage>
        <taxon>Bacteria</taxon>
        <taxon>Bacillati</taxon>
        <taxon>Bacillota</taxon>
        <taxon>Bacilli</taxon>
        <taxon>Bacillales</taxon>
        <taxon>Staphylococcaceae</taxon>
        <taxon>Staphylococcus</taxon>
    </lineage>
</organism>
<dbReference type="EC" id="2.5.1.75" evidence="1"/>
<dbReference type="EMBL" id="BX571857">
    <property type="protein sequence ID" value="CAG43014.1"/>
    <property type="molecule type" value="Genomic_DNA"/>
</dbReference>
<dbReference type="SMR" id="Q6G9R0"/>
<dbReference type="KEGG" id="sas:SAS1236"/>
<dbReference type="HOGENOM" id="CLU_032616_0_1_9"/>
<dbReference type="GO" id="GO:0005524">
    <property type="term" value="F:ATP binding"/>
    <property type="evidence" value="ECO:0007669"/>
    <property type="project" value="UniProtKB-UniRule"/>
</dbReference>
<dbReference type="GO" id="GO:0052381">
    <property type="term" value="F:tRNA dimethylallyltransferase activity"/>
    <property type="evidence" value="ECO:0007669"/>
    <property type="project" value="UniProtKB-UniRule"/>
</dbReference>
<dbReference type="GO" id="GO:0006400">
    <property type="term" value="P:tRNA modification"/>
    <property type="evidence" value="ECO:0007669"/>
    <property type="project" value="TreeGrafter"/>
</dbReference>
<dbReference type="Gene3D" id="1.10.20.140">
    <property type="match status" value="1"/>
</dbReference>
<dbReference type="Gene3D" id="3.40.50.300">
    <property type="entry name" value="P-loop containing nucleotide triphosphate hydrolases"/>
    <property type="match status" value="1"/>
</dbReference>
<dbReference type="HAMAP" id="MF_00185">
    <property type="entry name" value="IPP_trans"/>
    <property type="match status" value="1"/>
</dbReference>
<dbReference type="InterPro" id="IPR039657">
    <property type="entry name" value="Dimethylallyltransferase"/>
</dbReference>
<dbReference type="InterPro" id="IPR018022">
    <property type="entry name" value="IPT"/>
</dbReference>
<dbReference type="InterPro" id="IPR027417">
    <property type="entry name" value="P-loop_NTPase"/>
</dbReference>
<dbReference type="NCBIfam" id="TIGR00174">
    <property type="entry name" value="miaA"/>
    <property type="match status" value="1"/>
</dbReference>
<dbReference type="PANTHER" id="PTHR11088">
    <property type="entry name" value="TRNA DIMETHYLALLYLTRANSFERASE"/>
    <property type="match status" value="1"/>
</dbReference>
<dbReference type="PANTHER" id="PTHR11088:SF60">
    <property type="entry name" value="TRNA DIMETHYLALLYLTRANSFERASE"/>
    <property type="match status" value="1"/>
</dbReference>
<dbReference type="Pfam" id="PF01715">
    <property type="entry name" value="IPPT"/>
    <property type="match status" value="1"/>
</dbReference>
<dbReference type="SUPFAM" id="SSF52540">
    <property type="entry name" value="P-loop containing nucleoside triphosphate hydrolases"/>
    <property type="match status" value="2"/>
</dbReference>
<accession>Q6G9R0</accession>
<feature type="chain" id="PRO_0000163976" description="tRNA dimethylallyltransferase">
    <location>
        <begin position="1"/>
        <end position="311"/>
    </location>
</feature>
<feature type="region of interest" description="Interaction with substrate tRNA" evidence="1">
    <location>
        <begin position="38"/>
        <end position="41"/>
    </location>
</feature>
<feature type="region of interest" description="Interaction with substrate tRNA" evidence="1">
    <location>
        <begin position="166"/>
        <end position="170"/>
    </location>
</feature>
<feature type="binding site" evidence="1">
    <location>
        <begin position="13"/>
        <end position="20"/>
    </location>
    <ligand>
        <name>ATP</name>
        <dbReference type="ChEBI" id="CHEBI:30616"/>
    </ligand>
</feature>
<feature type="binding site" evidence="1">
    <location>
        <begin position="15"/>
        <end position="20"/>
    </location>
    <ligand>
        <name>substrate</name>
    </ligand>
</feature>
<feature type="site" description="Interaction with substrate tRNA" evidence="1">
    <location>
        <position position="104"/>
    </location>
</feature>
<keyword id="KW-0067">ATP-binding</keyword>
<keyword id="KW-0460">Magnesium</keyword>
<keyword id="KW-0547">Nucleotide-binding</keyword>
<keyword id="KW-0808">Transferase</keyword>
<keyword id="KW-0819">tRNA processing</keyword>
<protein>
    <recommendedName>
        <fullName evidence="1">tRNA dimethylallyltransferase</fullName>
        <ecNumber evidence="1">2.5.1.75</ecNumber>
    </recommendedName>
    <alternativeName>
        <fullName evidence="1">Dimethylallyl diphosphate:tRNA dimethylallyltransferase</fullName>
        <shortName evidence="1">DMAPP:tRNA dimethylallyltransferase</shortName>
        <shortName evidence="1">DMATase</shortName>
    </alternativeName>
    <alternativeName>
        <fullName evidence="1">Isopentenyl-diphosphate:tRNA isopentenyltransferase</fullName>
        <shortName evidence="1">IPP transferase</shortName>
        <shortName evidence="1">IPPT</shortName>
        <shortName evidence="1">IPTase</shortName>
    </alternativeName>
</protein>
<reference key="1">
    <citation type="journal article" date="2004" name="Proc. Natl. Acad. Sci. U.S.A.">
        <title>Complete genomes of two clinical Staphylococcus aureus strains: evidence for the rapid evolution of virulence and drug resistance.</title>
        <authorList>
            <person name="Holden M.T.G."/>
            <person name="Feil E.J."/>
            <person name="Lindsay J.A."/>
            <person name="Peacock S.J."/>
            <person name="Day N.P.J."/>
            <person name="Enright M.C."/>
            <person name="Foster T.J."/>
            <person name="Moore C.E."/>
            <person name="Hurst L."/>
            <person name="Atkin R."/>
            <person name="Barron A."/>
            <person name="Bason N."/>
            <person name="Bentley S.D."/>
            <person name="Chillingworth C."/>
            <person name="Chillingworth T."/>
            <person name="Churcher C."/>
            <person name="Clark L."/>
            <person name="Corton C."/>
            <person name="Cronin A."/>
            <person name="Doggett J."/>
            <person name="Dowd L."/>
            <person name="Feltwell T."/>
            <person name="Hance Z."/>
            <person name="Harris B."/>
            <person name="Hauser H."/>
            <person name="Holroyd S."/>
            <person name="Jagels K."/>
            <person name="James K.D."/>
            <person name="Lennard N."/>
            <person name="Line A."/>
            <person name="Mayes R."/>
            <person name="Moule S."/>
            <person name="Mungall K."/>
            <person name="Ormond D."/>
            <person name="Quail M.A."/>
            <person name="Rabbinowitsch E."/>
            <person name="Rutherford K.M."/>
            <person name="Sanders M."/>
            <person name="Sharp S."/>
            <person name="Simmonds M."/>
            <person name="Stevens K."/>
            <person name="Whitehead S."/>
            <person name="Barrell B.G."/>
            <person name="Spratt B.G."/>
            <person name="Parkhill J."/>
        </authorList>
    </citation>
    <scope>NUCLEOTIDE SEQUENCE [LARGE SCALE GENOMIC DNA]</scope>
    <source>
        <strain>MSSA476</strain>
    </source>
</reference>